<gene>
    <name type="primary">5HTB2</name>
</gene>
<keyword id="KW-1003">Cell membrane</keyword>
<keyword id="KW-1015">Disulfide bond</keyword>
<keyword id="KW-0297">G-protein coupled receptor</keyword>
<keyword id="KW-0325">Glycoprotein</keyword>
<keyword id="KW-0472">Membrane</keyword>
<keyword id="KW-0675">Receptor</keyword>
<keyword id="KW-0807">Transducer</keyword>
<keyword id="KW-0812">Transmembrane</keyword>
<keyword id="KW-1133">Transmembrane helix</keyword>
<proteinExistence type="evidence at transcript level"/>
<name>5HTB2_APLCA</name>
<organism>
    <name type="scientific">Aplysia californica</name>
    <name type="common">California sea hare</name>
    <dbReference type="NCBI Taxonomy" id="6500"/>
    <lineage>
        <taxon>Eukaryota</taxon>
        <taxon>Metazoa</taxon>
        <taxon>Spiralia</taxon>
        <taxon>Lophotrochozoa</taxon>
        <taxon>Mollusca</taxon>
        <taxon>Gastropoda</taxon>
        <taxon>Heterobranchia</taxon>
        <taxon>Euthyneura</taxon>
        <taxon>Tectipleura</taxon>
        <taxon>Aplysiida</taxon>
        <taxon>Aplysioidea</taxon>
        <taxon>Aplysiidae</taxon>
        <taxon>Aplysia</taxon>
    </lineage>
</organism>
<comment type="function">
    <text>This is one of the several different receptors for 5-hydroxytryptamine (serotonin). 5-HT plays important roles in various behavioral and physiological processes in aplysia. These include feeding, locomotion, circadian rhythm, learning and memory, synaptic plasticity, and synaptic growth. This receptor is mediated by G proteins that stimulate phospholipase C.</text>
</comment>
<comment type="subcellular location">
    <subcellularLocation>
        <location>Cell membrane</location>
        <topology>Multi-pass membrane protein</topology>
    </subcellularLocation>
</comment>
<comment type="tissue specificity">
    <text>Central nervous system.</text>
</comment>
<comment type="similarity">
    <text evidence="3">Belongs to the G-protein coupled receptor 1 family.</text>
</comment>
<dbReference type="EMBL" id="L43558">
    <property type="protein sequence ID" value="AAA93102.1"/>
    <property type="molecule type" value="Genomic_DNA"/>
</dbReference>
<dbReference type="SMR" id="Q16951"/>
<dbReference type="GlyCosmos" id="Q16951">
    <property type="glycosylation" value="1 site, No reported glycans"/>
</dbReference>
<dbReference type="OrthoDB" id="5957871at2759"/>
<dbReference type="Proteomes" id="UP000694888">
    <property type="component" value="Unplaced"/>
</dbReference>
<dbReference type="GO" id="GO:0005886">
    <property type="term" value="C:plasma membrane"/>
    <property type="evidence" value="ECO:0007669"/>
    <property type="project" value="UniProtKB-SubCell"/>
</dbReference>
<dbReference type="GO" id="GO:0004930">
    <property type="term" value="F:G protein-coupled receptor activity"/>
    <property type="evidence" value="ECO:0007669"/>
    <property type="project" value="UniProtKB-KW"/>
</dbReference>
<dbReference type="GO" id="GO:0071880">
    <property type="term" value="P:adenylate cyclase-activating adrenergic receptor signaling pathway"/>
    <property type="evidence" value="ECO:0007669"/>
    <property type="project" value="TreeGrafter"/>
</dbReference>
<dbReference type="GO" id="GO:0043410">
    <property type="term" value="P:positive regulation of MAPK cascade"/>
    <property type="evidence" value="ECO:0007669"/>
    <property type="project" value="TreeGrafter"/>
</dbReference>
<dbReference type="CDD" id="cd15065">
    <property type="entry name" value="7tmA_Ap5-HTB1-like"/>
    <property type="match status" value="1"/>
</dbReference>
<dbReference type="Gene3D" id="1.20.1070.10">
    <property type="entry name" value="Rhodopsin 7-helix transmembrane proteins"/>
    <property type="match status" value="1"/>
</dbReference>
<dbReference type="InterPro" id="IPR000276">
    <property type="entry name" value="GPCR_Rhodpsn"/>
</dbReference>
<dbReference type="InterPro" id="IPR017452">
    <property type="entry name" value="GPCR_Rhodpsn_7TM"/>
</dbReference>
<dbReference type="PANTHER" id="PTHR24248">
    <property type="entry name" value="ADRENERGIC RECEPTOR-RELATED G-PROTEIN COUPLED RECEPTOR"/>
    <property type="match status" value="1"/>
</dbReference>
<dbReference type="PANTHER" id="PTHR24248:SF66">
    <property type="entry name" value="OCTOPAMINE RECEPTOR BETA-3R"/>
    <property type="match status" value="1"/>
</dbReference>
<dbReference type="Pfam" id="PF00001">
    <property type="entry name" value="7tm_1"/>
    <property type="match status" value="1"/>
</dbReference>
<dbReference type="PRINTS" id="PR00237">
    <property type="entry name" value="GPCRRHODOPSN"/>
</dbReference>
<dbReference type="SMART" id="SM01381">
    <property type="entry name" value="7TM_GPCR_Srsx"/>
    <property type="match status" value="1"/>
</dbReference>
<dbReference type="SUPFAM" id="SSF81321">
    <property type="entry name" value="Family A G protein-coupled receptor-like"/>
    <property type="match status" value="1"/>
</dbReference>
<dbReference type="PROSITE" id="PS50262">
    <property type="entry name" value="G_PROTEIN_RECEP_F1_2"/>
    <property type="match status" value="1"/>
</dbReference>
<reference key="1">
    <citation type="journal article" date="1995" name="J. Neurosci.">
        <title>Cloning and characterization of two related serotonergic receptors from the brain and the reproductive system of Aplysia that activate phospholipase C.</title>
        <authorList>
            <person name="Li X.C."/>
            <person name="Giot J.F."/>
            <person name="Kuhl D."/>
            <person name="Hen R."/>
            <person name="Kandel E.R."/>
        </authorList>
    </citation>
    <scope>NUCLEOTIDE SEQUENCE [GENOMIC DNA]</scope>
</reference>
<accession>Q16951</accession>
<protein>
    <recommendedName>
        <fullName>5-hydroxytryptamine receptor 2</fullName>
    </recommendedName>
    <alternativeName>
        <fullName>5-HTB2</fullName>
    </alternativeName>
    <alternativeName>
        <fullName>Serotonin receptor 2</fullName>
    </alternativeName>
</protein>
<sequence>MLCGRLRHTMNSTTCFFSHRTVLIGIVGSLIIAVSVVGNVLVCLAIFTEPILSHSKSKFFIVSLAVADLLLALLVMTFALVNSLYGYWLFGETFCFIWMSADVMCETASIFSICVISYNRLKQVQKPLQYEEFMTTTRALLIIASLWICSFVVSFVPFFLEWHELSMEEIKTIFKDLISDKVKTSDAHTFSFALEQTLGDNRTSNPKPECLFDVHFIYSVIYSLFCFYIPCTLMLRNYLRLFLIAKKHHVRIKNLHRLHRNQGTQGSKAARTLTIITGTFLACWLPFFIINPIEAVDEHLIPLECFMVTIWLGYFNSCVNPIIYGTSNSKFRAAFQRLLRCRSVKSTVSSISPVASVYRAFSWIRPSLLDGPPSAVCDTGQDENRKGGGCVTTIPTESHVIISEEEIRANVMLSESDTVFS</sequence>
<feature type="chain" id="PRO_0000068984" description="5-hydroxytryptamine receptor 2">
    <location>
        <begin position="1"/>
        <end position="421"/>
    </location>
</feature>
<feature type="topological domain" description="Extracellular" evidence="1">
    <location>
        <begin position="1"/>
        <end position="21"/>
    </location>
</feature>
<feature type="transmembrane region" description="Helical; Name=1" evidence="1">
    <location>
        <begin position="22"/>
        <end position="42"/>
    </location>
</feature>
<feature type="topological domain" description="Cytoplasmic" evidence="1">
    <location>
        <begin position="43"/>
        <end position="59"/>
    </location>
</feature>
<feature type="transmembrane region" description="Helical; Name=2" evidence="1">
    <location>
        <begin position="60"/>
        <end position="79"/>
    </location>
</feature>
<feature type="topological domain" description="Extracellular" evidence="1">
    <location>
        <begin position="80"/>
        <end position="95"/>
    </location>
</feature>
<feature type="transmembrane region" description="Helical; Name=3" evidence="1">
    <location>
        <begin position="96"/>
        <end position="118"/>
    </location>
</feature>
<feature type="topological domain" description="Cytoplasmic" evidence="1">
    <location>
        <begin position="119"/>
        <end position="138"/>
    </location>
</feature>
<feature type="transmembrane region" description="Helical; Name=4" evidence="1">
    <location>
        <begin position="139"/>
        <end position="160"/>
    </location>
</feature>
<feature type="topological domain" description="Extracellular" evidence="1">
    <location>
        <begin position="161"/>
        <end position="213"/>
    </location>
</feature>
<feature type="transmembrane region" description="Helical; Name=5" evidence="1">
    <location>
        <begin position="214"/>
        <end position="234"/>
    </location>
</feature>
<feature type="topological domain" description="Cytoplasmic" evidence="1">
    <location>
        <begin position="235"/>
        <end position="274"/>
    </location>
</feature>
<feature type="transmembrane region" description="Helical; Name=6" evidence="1">
    <location>
        <begin position="275"/>
        <end position="295"/>
    </location>
</feature>
<feature type="topological domain" description="Extracellular" evidence="1">
    <location>
        <begin position="296"/>
        <end position="304"/>
    </location>
</feature>
<feature type="transmembrane region" description="Helical; Name=7" evidence="1">
    <location>
        <begin position="305"/>
        <end position="325"/>
    </location>
</feature>
<feature type="topological domain" description="Cytoplasmic" evidence="1">
    <location>
        <begin position="326"/>
        <end position="421"/>
    </location>
</feature>
<feature type="glycosylation site" description="N-linked (GlcNAc...) asparagine" evidence="2">
    <location>
        <position position="11"/>
    </location>
</feature>
<feature type="disulfide bond" evidence="3">
    <location>
        <begin position="95"/>
        <end position="210"/>
    </location>
</feature>
<evidence type="ECO:0000250" key="1"/>
<evidence type="ECO:0000255" key="2"/>
<evidence type="ECO:0000255" key="3">
    <source>
        <dbReference type="PROSITE-ProRule" id="PRU00521"/>
    </source>
</evidence>